<organism>
    <name type="scientific">Mycobacterium tuberculosis (strain ATCC 25618 / H37Rv)</name>
    <dbReference type="NCBI Taxonomy" id="83332"/>
    <lineage>
        <taxon>Bacteria</taxon>
        <taxon>Bacillati</taxon>
        <taxon>Actinomycetota</taxon>
        <taxon>Actinomycetes</taxon>
        <taxon>Mycobacteriales</taxon>
        <taxon>Mycobacteriaceae</taxon>
        <taxon>Mycobacterium</taxon>
        <taxon>Mycobacterium tuberculosis complex</taxon>
    </lineage>
</organism>
<sequence>MTINYQFGDVDAHGAMIRAQAGLLEAEHQAIIRDVLTASDFWGGAGSAACQGFITQLGRNFQVIYEQANAHGQKVQAAGNNMAQTDSAVGSSWA</sequence>
<evidence type="ECO:0000269" key="1">
    <source>
    </source>
</evidence>
<evidence type="ECO:0000269" key="2">
    <source>
    </source>
</evidence>
<evidence type="ECO:0000269" key="3">
    <source>
    </source>
</evidence>
<evidence type="ECO:0000269" key="4">
    <source>
    </source>
</evidence>
<evidence type="ECO:0000303" key="5">
    <source>
    </source>
</evidence>
<evidence type="ECO:0000305" key="6"/>
<evidence type="ECO:0000305" key="7">
    <source>
    </source>
</evidence>
<evidence type="ECO:0000305" key="8">
    <source>
    </source>
</evidence>
<name>ESXL_MYCTU</name>
<keyword id="KW-1185">Reference proteome</keyword>
<keyword id="KW-0964">Secreted</keyword>
<keyword id="KW-0843">Virulence</keyword>
<proteinExistence type="evidence at protein level"/>
<gene>
    <name evidence="5" type="primary">esxL</name>
    <name type="ordered locus">Rv1198</name>
    <name type="ORF">MTCI364.10</name>
</gene>
<feature type="chain" id="PRO_0000167805" description="ESAT-6-like protein EsxL">
    <location>
        <begin position="1"/>
        <end position="94"/>
    </location>
</feature>
<reference key="1">
    <citation type="journal article" date="1998" name="Nature">
        <title>Deciphering the biology of Mycobacterium tuberculosis from the complete genome sequence.</title>
        <authorList>
            <person name="Cole S.T."/>
            <person name="Brosch R."/>
            <person name="Parkhill J."/>
            <person name="Garnier T."/>
            <person name="Churcher C.M."/>
            <person name="Harris D.E."/>
            <person name="Gordon S.V."/>
            <person name="Eiglmeier K."/>
            <person name="Gas S."/>
            <person name="Barry C.E. III"/>
            <person name="Tekaia F."/>
            <person name="Badcock K."/>
            <person name="Basham D."/>
            <person name="Brown D."/>
            <person name="Chillingworth T."/>
            <person name="Connor R."/>
            <person name="Davies R.M."/>
            <person name="Devlin K."/>
            <person name="Feltwell T."/>
            <person name="Gentles S."/>
            <person name="Hamlin N."/>
            <person name="Holroyd S."/>
            <person name="Hornsby T."/>
            <person name="Jagels K."/>
            <person name="Krogh A."/>
            <person name="McLean J."/>
            <person name="Moule S."/>
            <person name="Murphy L.D."/>
            <person name="Oliver S."/>
            <person name="Osborne J."/>
            <person name="Quail M.A."/>
            <person name="Rajandream M.A."/>
            <person name="Rogers J."/>
            <person name="Rutter S."/>
            <person name="Seeger K."/>
            <person name="Skelton S."/>
            <person name="Squares S."/>
            <person name="Squares R."/>
            <person name="Sulston J.E."/>
            <person name="Taylor K."/>
            <person name="Whitehead S."/>
            <person name="Barrell B.G."/>
        </authorList>
    </citation>
    <scope>NUCLEOTIDE SEQUENCE [LARGE SCALE GENOMIC DNA]</scope>
    <source>
        <strain>ATCC 25618 / H37Rv</strain>
    </source>
</reference>
<reference key="2">
    <citation type="journal article" date="2007" name="Proteomics">
        <title>Comprehensive analysis of exported proteins from Mycobacterium tuberculosis H37Rv.</title>
        <authorList>
            <person name="Malen H."/>
            <person name="Berven F.S."/>
            <person name="Fladmark K.E."/>
            <person name="Wiker H.G."/>
        </authorList>
    </citation>
    <scope>IDENTIFICATION BY MASS SPECTROMETRY</scope>
    <scope>SUBCELLULAR LOCATION</scope>
    <source>
        <strain>ATCC 27294 / TMC 102 / H37Rv</strain>
    </source>
</reference>
<reference key="3">
    <citation type="journal article" date="2009" name="PLoS Pathog.">
        <title>Systematic genetic nomenclature for type VII secretion systems.</title>
        <authorList>
            <person name="Bitter W."/>
            <person name="Houben E.N."/>
            <person name="Bottai D."/>
            <person name="Brodin P."/>
            <person name="Brown E.J."/>
            <person name="Cox J.S."/>
            <person name="Derbyshire K."/>
            <person name="Fortune S.M."/>
            <person name="Gao L.Y."/>
            <person name="Liu J."/>
            <person name="Gey van Pittius N.C."/>
            <person name="Pym A.S."/>
            <person name="Rubin E.J."/>
            <person name="Sherman D.R."/>
            <person name="Cole S.T."/>
            <person name="Brosch R."/>
        </authorList>
    </citation>
    <scope>NOMENCLATURE</scope>
</reference>
<reference key="4">
    <citation type="journal article" date="2011" name="Front. Microbiol.">
        <title>Mycobacterium tuberculosis RNA expression patterns in sputum bacteria indicate secreted Esx factors contributing to growth are highly expressed in active disease.</title>
        <authorList>
            <person name="Bukka A."/>
            <person name="Price C.T."/>
            <person name="Kernodle D.S."/>
            <person name="Graham J.E."/>
        </authorList>
    </citation>
    <scope>INDUCTION</scope>
    <scope>DISRUPTION PHENOTYPE</scope>
    <source>
        <strain>ATCC 25618 / H37Rv</strain>
    </source>
</reference>
<reference key="5">
    <citation type="journal article" date="2011" name="Mol. Cell. Proteomics">
        <title>Proteogenomic analysis of Mycobacterium tuberculosis by high resolution mass spectrometry.</title>
        <authorList>
            <person name="Kelkar D.S."/>
            <person name="Kumar D."/>
            <person name="Kumar P."/>
            <person name="Balakrishnan L."/>
            <person name="Muthusamy B."/>
            <person name="Yadav A.K."/>
            <person name="Shrivastava P."/>
            <person name="Marimuthu A."/>
            <person name="Anand S."/>
            <person name="Sundaram H."/>
            <person name="Kingsbury R."/>
            <person name="Harsha H.C."/>
            <person name="Nair B."/>
            <person name="Prasad T.S."/>
            <person name="Chauhan D.S."/>
            <person name="Katoch K."/>
            <person name="Katoch V.M."/>
            <person name="Kumar P."/>
            <person name="Chaerkady R."/>
            <person name="Ramachandran S."/>
            <person name="Dash D."/>
            <person name="Pandey A."/>
        </authorList>
    </citation>
    <scope>IDENTIFICATION BY MASS SPECTROMETRY [LARGE SCALE ANALYSIS]</scope>
    <source>
        <strain>ATCC 25618 / H37Rv</strain>
    </source>
</reference>
<reference key="6">
    <citation type="journal article" date="2014" name="Biochem. Biophys. Res. Commun.">
        <title>A novel firefly luciferase biosensor enhances the detection of apoptosis induced by ESAT-6 family proteins of Mycobacterium tuberculosis.</title>
        <authorList>
            <person name="Shi J."/>
            <person name="Zhang H."/>
            <person name="Fang L."/>
            <person name="Xi Y."/>
            <person name="Zhou Y."/>
            <person name="Luo R."/>
            <person name="Wang D."/>
            <person name="Xiao S."/>
            <person name="Chen H."/>
        </authorList>
    </citation>
    <scope>FUNCTION IN VIRULENCE</scope>
    <source>
        <strain>H37Rv</strain>
    </source>
</reference>
<reference key="7">
    <citation type="journal article" date="2017" name="Biochim. Biophys. Acta">
        <title>Characterization of culture filtrate proteins Rv1197 and Rv1198 of ESAT-6 family from Mycobacterium tuberculosis H37Rv.</title>
        <authorList>
            <person name="Pandey H."/>
            <person name="Tripathi S."/>
            <person name="Srivastava K."/>
            <person name="Tripathi D.K."/>
            <person name="Srivastava M."/>
            <person name="Kant S."/>
            <person name="Srivastava K.K."/>
            <person name="Arora A."/>
        </authorList>
    </citation>
    <scope>FUNCTION</scope>
    <scope>IMMUNOGENICITY</scope>
    <scope>SUBUNIT</scope>
    <scope>INTERACTION WITH ESXK</scope>
    <scope>SUBCELLULAR LOCATION</scope>
    <source>
        <strain>H37Rv</strain>
    </source>
</reference>
<accession>P9WNJ5</accession>
<accession>L0T8P7</accession>
<accession>O05300</accession>
<dbReference type="EMBL" id="AL123456">
    <property type="protein sequence ID" value="CCP43954.1"/>
    <property type="molecule type" value="Genomic_DNA"/>
</dbReference>
<dbReference type="PIR" id="D70608">
    <property type="entry name" value="D70608"/>
</dbReference>
<dbReference type="RefSeq" id="NP_215714.1">
    <property type="nucleotide sequence ID" value="NC_000962.3"/>
</dbReference>
<dbReference type="RefSeq" id="WP_003898766.1">
    <property type="nucleotide sequence ID" value="NZ_NVQJ01000025.1"/>
</dbReference>
<dbReference type="SMR" id="P9WNJ5"/>
<dbReference type="STRING" id="83332.Rv1198"/>
<dbReference type="PaxDb" id="83332-Rv1198"/>
<dbReference type="DNASU" id="886090"/>
<dbReference type="GeneID" id="886090"/>
<dbReference type="KEGG" id="mtu:Rv1198"/>
<dbReference type="KEGG" id="mtv:RVBD_1198"/>
<dbReference type="TubercuList" id="Rv1198"/>
<dbReference type="eggNOG" id="ENOG5032I3T">
    <property type="taxonomic scope" value="Bacteria"/>
</dbReference>
<dbReference type="InParanoid" id="P9WNJ5"/>
<dbReference type="OrthoDB" id="4625013at2"/>
<dbReference type="PhylomeDB" id="P9WNJ5"/>
<dbReference type="Proteomes" id="UP000001584">
    <property type="component" value="Chromosome"/>
</dbReference>
<dbReference type="GO" id="GO:0005576">
    <property type="term" value="C:extracellular region"/>
    <property type="evidence" value="ECO:0007005"/>
    <property type="project" value="MTBBASE"/>
</dbReference>
<dbReference type="GO" id="GO:0009274">
    <property type="term" value="C:peptidoglycan-based cell wall"/>
    <property type="evidence" value="ECO:0007005"/>
    <property type="project" value="MTBBASE"/>
</dbReference>
<dbReference type="GO" id="GO:0005886">
    <property type="term" value="C:plasma membrane"/>
    <property type="evidence" value="ECO:0007005"/>
    <property type="project" value="MTBBASE"/>
</dbReference>
<dbReference type="FunFam" id="1.10.287.1060:FF:000004">
    <property type="entry name" value="ESAT-6-like protein EsxI"/>
    <property type="match status" value="1"/>
</dbReference>
<dbReference type="Gene3D" id="1.10.287.1060">
    <property type="entry name" value="ESAT-6-like"/>
    <property type="match status" value="1"/>
</dbReference>
<dbReference type="InterPro" id="IPR009416">
    <property type="entry name" value="ESAT-6-like_Myco"/>
</dbReference>
<dbReference type="InterPro" id="IPR036689">
    <property type="entry name" value="ESAT-6-like_sf"/>
</dbReference>
<dbReference type="InterPro" id="IPR010310">
    <property type="entry name" value="T7SS_ESAT-6-like"/>
</dbReference>
<dbReference type="Pfam" id="PF06013">
    <property type="entry name" value="WXG100"/>
    <property type="match status" value="1"/>
</dbReference>
<dbReference type="PIRSF" id="PIRSF037656">
    <property type="entry name" value="DUF1066"/>
    <property type="match status" value="1"/>
</dbReference>
<dbReference type="SUPFAM" id="SSF140453">
    <property type="entry name" value="EsxAB dimer-like"/>
    <property type="match status" value="1"/>
</dbReference>
<protein>
    <recommendedName>
        <fullName evidence="6">ESAT-6-like protein EsxL</fullName>
    </recommendedName>
</protein>
<comment type="function">
    <text evidence="3 4">Induces apoptosis of host cells (PubMed:25242740). Is immunogenic with highly specific seroreactivity towards TB patients' serum (PubMed:27751956).</text>
</comment>
<comment type="subunit">
    <text evidence="4">Strongly interacts with EsxK to form a heterodimeric complex under reducing conditions. The complex is regulated by the redox state of EsxL.</text>
</comment>
<comment type="subcellular location">
    <subcellularLocation>
        <location evidence="1">Secreted</location>
    </subcellularLocation>
    <text evidence="7 8">Probably secreted via the ESX-5 / type VII secretion system (T7SS) (Probable). Secretion may depend on complex formation with EsxK (Probable).</text>
</comment>
<comment type="induction">
    <text evidence="2">Differentially expressed under different growth conditions. Highly expressed in sputum bacteria.</text>
</comment>
<comment type="disruption phenotype">
    <text evidence="2">EsxKL deletion mutant shows reduced intracellular growth in primary human macrophages. Also shows growth defects in the absence of host cells.</text>
</comment>
<comment type="miscellaneous">
    <text evidence="4">In BALB/c mice, immunization with EsxL-FIA induces a pro-inflammatory response with elevated levels of TNF and IL-6, along with low induction of IFN-gamma, IL-2 and IL-10, but no induction of IL-4.</text>
</comment>
<comment type="similarity">
    <text evidence="7">Belongs to the WXG100 family. ESAT-6 subfamily.</text>
</comment>